<name>METK_DELAS</name>
<organism>
    <name type="scientific">Delftia acidovorans (strain DSM 14801 / SPH-1)</name>
    <dbReference type="NCBI Taxonomy" id="398578"/>
    <lineage>
        <taxon>Bacteria</taxon>
        <taxon>Pseudomonadati</taxon>
        <taxon>Pseudomonadota</taxon>
        <taxon>Betaproteobacteria</taxon>
        <taxon>Burkholderiales</taxon>
        <taxon>Comamonadaceae</taxon>
        <taxon>Delftia</taxon>
    </lineage>
</organism>
<evidence type="ECO:0000255" key="1">
    <source>
        <dbReference type="HAMAP-Rule" id="MF_00086"/>
    </source>
</evidence>
<gene>
    <name evidence="1" type="primary">metK</name>
    <name type="ordered locus">Daci_5604</name>
</gene>
<feature type="chain" id="PRO_1000093044" description="S-adenosylmethionine synthase">
    <location>
        <begin position="1"/>
        <end position="393"/>
    </location>
</feature>
<feature type="region of interest" description="Flexible loop" evidence="1">
    <location>
        <begin position="100"/>
        <end position="110"/>
    </location>
</feature>
<feature type="binding site" description="in other chain" evidence="1">
    <location>
        <position position="16"/>
    </location>
    <ligand>
        <name>ATP</name>
        <dbReference type="ChEBI" id="CHEBI:30616"/>
        <note>ligand shared between two neighboring subunits</note>
    </ligand>
</feature>
<feature type="binding site" evidence="1">
    <location>
        <position position="18"/>
    </location>
    <ligand>
        <name>Mg(2+)</name>
        <dbReference type="ChEBI" id="CHEBI:18420"/>
    </ligand>
</feature>
<feature type="binding site" evidence="1">
    <location>
        <position position="44"/>
    </location>
    <ligand>
        <name>K(+)</name>
        <dbReference type="ChEBI" id="CHEBI:29103"/>
    </ligand>
</feature>
<feature type="binding site" description="in other chain" evidence="1">
    <location>
        <position position="57"/>
    </location>
    <ligand>
        <name>L-methionine</name>
        <dbReference type="ChEBI" id="CHEBI:57844"/>
        <note>ligand shared between two neighboring subunits</note>
    </ligand>
</feature>
<feature type="binding site" description="in other chain" evidence="1">
    <location>
        <position position="100"/>
    </location>
    <ligand>
        <name>L-methionine</name>
        <dbReference type="ChEBI" id="CHEBI:57844"/>
        <note>ligand shared between two neighboring subunits</note>
    </ligand>
</feature>
<feature type="binding site" description="in other chain" evidence="1">
    <location>
        <begin position="167"/>
        <end position="169"/>
    </location>
    <ligand>
        <name>ATP</name>
        <dbReference type="ChEBI" id="CHEBI:30616"/>
        <note>ligand shared between two neighboring subunits</note>
    </ligand>
</feature>
<feature type="binding site" description="in other chain" evidence="1">
    <location>
        <begin position="238"/>
        <end position="239"/>
    </location>
    <ligand>
        <name>ATP</name>
        <dbReference type="ChEBI" id="CHEBI:30616"/>
        <note>ligand shared between two neighboring subunits</note>
    </ligand>
</feature>
<feature type="binding site" evidence="1">
    <location>
        <position position="247"/>
    </location>
    <ligand>
        <name>ATP</name>
        <dbReference type="ChEBI" id="CHEBI:30616"/>
        <note>ligand shared between two neighboring subunits</note>
    </ligand>
</feature>
<feature type="binding site" evidence="1">
    <location>
        <position position="247"/>
    </location>
    <ligand>
        <name>L-methionine</name>
        <dbReference type="ChEBI" id="CHEBI:57844"/>
        <note>ligand shared between two neighboring subunits</note>
    </ligand>
</feature>
<feature type="binding site" description="in other chain" evidence="1">
    <location>
        <begin position="253"/>
        <end position="254"/>
    </location>
    <ligand>
        <name>ATP</name>
        <dbReference type="ChEBI" id="CHEBI:30616"/>
        <note>ligand shared between two neighboring subunits</note>
    </ligand>
</feature>
<feature type="binding site" evidence="1">
    <location>
        <position position="270"/>
    </location>
    <ligand>
        <name>ATP</name>
        <dbReference type="ChEBI" id="CHEBI:30616"/>
        <note>ligand shared between two neighboring subunits</note>
    </ligand>
</feature>
<feature type="binding site" evidence="1">
    <location>
        <position position="274"/>
    </location>
    <ligand>
        <name>ATP</name>
        <dbReference type="ChEBI" id="CHEBI:30616"/>
        <note>ligand shared between two neighboring subunits</note>
    </ligand>
</feature>
<feature type="binding site" description="in other chain" evidence="1">
    <location>
        <position position="278"/>
    </location>
    <ligand>
        <name>L-methionine</name>
        <dbReference type="ChEBI" id="CHEBI:57844"/>
        <note>ligand shared between two neighboring subunits</note>
    </ligand>
</feature>
<keyword id="KW-0067">ATP-binding</keyword>
<keyword id="KW-0963">Cytoplasm</keyword>
<keyword id="KW-0460">Magnesium</keyword>
<keyword id="KW-0479">Metal-binding</keyword>
<keyword id="KW-0547">Nucleotide-binding</keyword>
<keyword id="KW-0554">One-carbon metabolism</keyword>
<keyword id="KW-0630">Potassium</keyword>
<keyword id="KW-1185">Reference proteome</keyword>
<keyword id="KW-0808">Transferase</keyword>
<proteinExistence type="inferred from homology"/>
<dbReference type="EC" id="2.5.1.6" evidence="1"/>
<dbReference type="EMBL" id="CP000884">
    <property type="protein sequence ID" value="ABX38233.1"/>
    <property type="molecule type" value="Genomic_DNA"/>
</dbReference>
<dbReference type="RefSeq" id="WP_012207402.1">
    <property type="nucleotide sequence ID" value="NC_010002.1"/>
</dbReference>
<dbReference type="SMR" id="A9BXF7"/>
<dbReference type="STRING" id="398578.Daci_5604"/>
<dbReference type="GeneID" id="24115776"/>
<dbReference type="KEGG" id="dac:Daci_5604"/>
<dbReference type="eggNOG" id="COG0192">
    <property type="taxonomic scope" value="Bacteria"/>
</dbReference>
<dbReference type="HOGENOM" id="CLU_041802_1_1_4"/>
<dbReference type="UniPathway" id="UPA00315">
    <property type="reaction ID" value="UER00080"/>
</dbReference>
<dbReference type="Proteomes" id="UP000000784">
    <property type="component" value="Chromosome"/>
</dbReference>
<dbReference type="GO" id="GO:0005737">
    <property type="term" value="C:cytoplasm"/>
    <property type="evidence" value="ECO:0007669"/>
    <property type="project" value="UniProtKB-SubCell"/>
</dbReference>
<dbReference type="GO" id="GO:0005524">
    <property type="term" value="F:ATP binding"/>
    <property type="evidence" value="ECO:0007669"/>
    <property type="project" value="UniProtKB-UniRule"/>
</dbReference>
<dbReference type="GO" id="GO:0000287">
    <property type="term" value="F:magnesium ion binding"/>
    <property type="evidence" value="ECO:0007669"/>
    <property type="project" value="UniProtKB-UniRule"/>
</dbReference>
<dbReference type="GO" id="GO:0004478">
    <property type="term" value="F:methionine adenosyltransferase activity"/>
    <property type="evidence" value="ECO:0007669"/>
    <property type="project" value="UniProtKB-UniRule"/>
</dbReference>
<dbReference type="GO" id="GO:0006730">
    <property type="term" value="P:one-carbon metabolic process"/>
    <property type="evidence" value="ECO:0007669"/>
    <property type="project" value="UniProtKB-KW"/>
</dbReference>
<dbReference type="GO" id="GO:0006556">
    <property type="term" value="P:S-adenosylmethionine biosynthetic process"/>
    <property type="evidence" value="ECO:0007669"/>
    <property type="project" value="UniProtKB-UniRule"/>
</dbReference>
<dbReference type="CDD" id="cd18079">
    <property type="entry name" value="S-AdoMet_synt"/>
    <property type="match status" value="1"/>
</dbReference>
<dbReference type="FunFam" id="3.30.300.10:FF:000003">
    <property type="entry name" value="S-adenosylmethionine synthase"/>
    <property type="match status" value="1"/>
</dbReference>
<dbReference type="FunFam" id="3.30.300.10:FF:000004">
    <property type="entry name" value="S-adenosylmethionine synthase"/>
    <property type="match status" value="1"/>
</dbReference>
<dbReference type="Gene3D" id="3.30.300.10">
    <property type="match status" value="3"/>
</dbReference>
<dbReference type="HAMAP" id="MF_00086">
    <property type="entry name" value="S_AdoMet_synth1"/>
    <property type="match status" value="1"/>
</dbReference>
<dbReference type="InterPro" id="IPR022631">
    <property type="entry name" value="ADOMET_SYNTHASE_CS"/>
</dbReference>
<dbReference type="InterPro" id="IPR022630">
    <property type="entry name" value="S-AdoMet_synt_C"/>
</dbReference>
<dbReference type="InterPro" id="IPR022629">
    <property type="entry name" value="S-AdoMet_synt_central"/>
</dbReference>
<dbReference type="InterPro" id="IPR022628">
    <property type="entry name" value="S-AdoMet_synt_N"/>
</dbReference>
<dbReference type="InterPro" id="IPR002133">
    <property type="entry name" value="S-AdoMet_synthetase"/>
</dbReference>
<dbReference type="InterPro" id="IPR022636">
    <property type="entry name" value="S-AdoMet_synthetase_sfam"/>
</dbReference>
<dbReference type="NCBIfam" id="TIGR01034">
    <property type="entry name" value="metK"/>
    <property type="match status" value="1"/>
</dbReference>
<dbReference type="PANTHER" id="PTHR11964">
    <property type="entry name" value="S-ADENOSYLMETHIONINE SYNTHETASE"/>
    <property type="match status" value="1"/>
</dbReference>
<dbReference type="Pfam" id="PF02773">
    <property type="entry name" value="S-AdoMet_synt_C"/>
    <property type="match status" value="1"/>
</dbReference>
<dbReference type="Pfam" id="PF02772">
    <property type="entry name" value="S-AdoMet_synt_M"/>
    <property type="match status" value="1"/>
</dbReference>
<dbReference type="Pfam" id="PF00438">
    <property type="entry name" value="S-AdoMet_synt_N"/>
    <property type="match status" value="1"/>
</dbReference>
<dbReference type="PIRSF" id="PIRSF000497">
    <property type="entry name" value="MAT"/>
    <property type="match status" value="1"/>
</dbReference>
<dbReference type="SUPFAM" id="SSF55973">
    <property type="entry name" value="S-adenosylmethionine synthetase"/>
    <property type="match status" value="3"/>
</dbReference>
<dbReference type="PROSITE" id="PS00376">
    <property type="entry name" value="ADOMET_SYNTHASE_1"/>
    <property type="match status" value="1"/>
</dbReference>
<dbReference type="PROSITE" id="PS00377">
    <property type="entry name" value="ADOMET_SYNTHASE_2"/>
    <property type="match status" value="1"/>
</dbReference>
<reference key="1">
    <citation type="submission" date="2007-11" db="EMBL/GenBank/DDBJ databases">
        <title>Complete sequence of Delftia acidovorans DSM 14801 / SPH-1.</title>
        <authorList>
            <person name="Copeland A."/>
            <person name="Lucas S."/>
            <person name="Lapidus A."/>
            <person name="Barry K."/>
            <person name="Glavina del Rio T."/>
            <person name="Dalin E."/>
            <person name="Tice H."/>
            <person name="Pitluck S."/>
            <person name="Lowry S."/>
            <person name="Clum A."/>
            <person name="Schmutz J."/>
            <person name="Larimer F."/>
            <person name="Land M."/>
            <person name="Hauser L."/>
            <person name="Kyrpides N."/>
            <person name="Kim E."/>
            <person name="Schleheck D."/>
            <person name="Richardson P."/>
        </authorList>
    </citation>
    <scope>NUCLEOTIDE SEQUENCE [LARGE SCALE GENOMIC DNA]</scope>
    <source>
        <strain>DSM 14801 / SPH-1</strain>
    </source>
</reference>
<protein>
    <recommendedName>
        <fullName evidence="1">S-adenosylmethionine synthase</fullName>
        <shortName evidence="1">AdoMet synthase</shortName>
        <ecNumber evidence="1">2.5.1.6</ecNumber>
    </recommendedName>
    <alternativeName>
        <fullName evidence="1">MAT</fullName>
    </alternativeName>
    <alternativeName>
        <fullName evidence="1">Methionine adenosyltransferase</fullName>
    </alternativeName>
</protein>
<comment type="function">
    <text evidence="1">Catalyzes the formation of S-adenosylmethionine (AdoMet) from methionine and ATP. The overall synthetic reaction is composed of two sequential steps, AdoMet formation and the subsequent tripolyphosphate hydrolysis which occurs prior to release of AdoMet from the enzyme.</text>
</comment>
<comment type="catalytic activity">
    <reaction evidence="1">
        <text>L-methionine + ATP + H2O = S-adenosyl-L-methionine + phosphate + diphosphate</text>
        <dbReference type="Rhea" id="RHEA:21080"/>
        <dbReference type="ChEBI" id="CHEBI:15377"/>
        <dbReference type="ChEBI" id="CHEBI:30616"/>
        <dbReference type="ChEBI" id="CHEBI:33019"/>
        <dbReference type="ChEBI" id="CHEBI:43474"/>
        <dbReference type="ChEBI" id="CHEBI:57844"/>
        <dbReference type="ChEBI" id="CHEBI:59789"/>
        <dbReference type="EC" id="2.5.1.6"/>
    </reaction>
</comment>
<comment type="cofactor">
    <cofactor evidence="1">
        <name>Mg(2+)</name>
        <dbReference type="ChEBI" id="CHEBI:18420"/>
    </cofactor>
    <text evidence="1">Binds 2 divalent ions per subunit.</text>
</comment>
<comment type="cofactor">
    <cofactor evidence="1">
        <name>K(+)</name>
        <dbReference type="ChEBI" id="CHEBI:29103"/>
    </cofactor>
    <text evidence="1">Binds 1 potassium ion per subunit.</text>
</comment>
<comment type="pathway">
    <text evidence="1">Amino-acid biosynthesis; S-adenosyl-L-methionine biosynthesis; S-adenosyl-L-methionine from L-methionine: step 1/1.</text>
</comment>
<comment type="subunit">
    <text evidence="1">Homotetramer; dimer of dimers.</text>
</comment>
<comment type="subcellular location">
    <subcellularLocation>
        <location evidence="1">Cytoplasm</location>
    </subcellularLocation>
</comment>
<comment type="similarity">
    <text evidence="1">Belongs to the AdoMet synthase family.</text>
</comment>
<accession>A9BXF7</accession>
<sequence>MANDFLFTSESVSEGHPDKVADQISDAILDAIFAQDPYSRVAAETLTNTGLVVLAGEITTGANVDYIQVARDTIKRIGYDNTDYGIDYKGCAVLVAYDKQSQDIAQGVDKASDDELNTGAGDQGLMFGYACDETPELMPAPIYYAHRLVERQAQLRKDGRLPFLRPDAKSQVTMRYVDGKPHSIDTVVLSTQHSPDQSETATKMKASFTEAIIEEIIKPVLPSEWLQDTKYLINPTGRFVVGGPQGDCGLTGRKIIVDTYGGACPHGGGAFSGKDPTKVDRSAAYAARYVAKNIVAAGLARQCQIQVAYAIGVARPMNITVYTEGTGVIPDAEIAKLVAAHFDLRPKGIIQMLDLLRPIYSKTAAYGHFGREEPEFTWERTDKAAVLRAAAGL</sequence>